<sequence length="127" mass="14106">MSRDAFLGKYLSMAGPDEARNKVFIGVTKINGTILERIKALAERLGIPADAIMVEKAGILVPDVPEGKLNATIKLSKVEISLPERSSIQPPENYTVNSDRWNNQETLLRPLFGVFETLARLIDWLIS</sequence>
<proteinExistence type="predicted"/>
<dbReference type="EMBL" id="AE000782">
    <property type="protein sequence ID" value="AAB89125.1"/>
    <property type="molecule type" value="Genomic_DNA"/>
</dbReference>
<dbReference type="PIR" id="G69516">
    <property type="entry name" value="G69516"/>
</dbReference>
<dbReference type="RefSeq" id="WP_010879626.1">
    <property type="nucleotide sequence ID" value="NC_000917.1"/>
</dbReference>
<dbReference type="STRING" id="224325.AF_2135"/>
<dbReference type="PaxDb" id="224325-AF_2135"/>
<dbReference type="EnsemblBacteria" id="AAB89125">
    <property type="protein sequence ID" value="AAB89125"/>
    <property type="gene ID" value="AF_2135"/>
</dbReference>
<dbReference type="KEGG" id="afu:AF_2135"/>
<dbReference type="HOGENOM" id="CLU_1965427_0_0_2"/>
<dbReference type="Proteomes" id="UP000002199">
    <property type="component" value="Chromosome"/>
</dbReference>
<keyword id="KW-1185">Reference proteome</keyword>
<reference key="1">
    <citation type="journal article" date="1997" name="Nature">
        <title>The complete genome sequence of the hyperthermophilic, sulphate-reducing archaeon Archaeoglobus fulgidus.</title>
        <authorList>
            <person name="Klenk H.-P."/>
            <person name="Clayton R.A."/>
            <person name="Tomb J.-F."/>
            <person name="White O."/>
            <person name="Nelson K.E."/>
            <person name="Ketchum K.A."/>
            <person name="Dodson R.J."/>
            <person name="Gwinn M.L."/>
            <person name="Hickey E.K."/>
            <person name="Peterson J.D."/>
            <person name="Richardson D.L."/>
            <person name="Kerlavage A.R."/>
            <person name="Graham D.E."/>
            <person name="Kyrpides N.C."/>
            <person name="Fleischmann R.D."/>
            <person name="Quackenbush J."/>
            <person name="Lee N.H."/>
            <person name="Sutton G.G."/>
            <person name="Gill S.R."/>
            <person name="Kirkness E.F."/>
            <person name="Dougherty B.A."/>
            <person name="McKenney K."/>
            <person name="Adams M.D."/>
            <person name="Loftus B.J."/>
            <person name="Peterson S.N."/>
            <person name="Reich C.I."/>
            <person name="McNeil L.K."/>
            <person name="Badger J.H."/>
            <person name="Glodek A."/>
            <person name="Zhou L."/>
            <person name="Overbeek R."/>
            <person name="Gocayne J.D."/>
            <person name="Weidman J.F."/>
            <person name="McDonald L.A."/>
            <person name="Utterback T.R."/>
            <person name="Cotton M.D."/>
            <person name="Spriggs T."/>
            <person name="Artiach P."/>
            <person name="Kaine B.P."/>
            <person name="Sykes S.M."/>
            <person name="Sadow P.W."/>
            <person name="D'Andrea K.P."/>
            <person name="Bowman C."/>
            <person name="Fujii C."/>
            <person name="Garland S.A."/>
            <person name="Mason T.M."/>
            <person name="Olsen G.J."/>
            <person name="Fraser C.M."/>
            <person name="Smith H.O."/>
            <person name="Woese C.R."/>
            <person name="Venter J.C."/>
        </authorList>
    </citation>
    <scope>NUCLEOTIDE SEQUENCE [LARGE SCALE GENOMIC DNA]</scope>
    <source>
        <strain>ATCC 49558 / DSM 4304 / JCM 9628 / NBRC 100126 / VC-16</strain>
    </source>
</reference>
<gene>
    <name type="ordered locus">AF_2135</name>
</gene>
<name>Y2135_ARCFU</name>
<protein>
    <recommendedName>
        <fullName>Uncharacterized protein AF_2135</fullName>
    </recommendedName>
</protein>
<feature type="chain" id="PRO_0000128101" description="Uncharacterized protein AF_2135">
    <location>
        <begin position="1"/>
        <end position="127"/>
    </location>
</feature>
<organism>
    <name type="scientific">Archaeoglobus fulgidus (strain ATCC 49558 / DSM 4304 / JCM 9628 / NBRC 100126 / VC-16)</name>
    <dbReference type="NCBI Taxonomy" id="224325"/>
    <lineage>
        <taxon>Archaea</taxon>
        <taxon>Methanobacteriati</taxon>
        <taxon>Methanobacteriota</taxon>
        <taxon>Archaeoglobi</taxon>
        <taxon>Archaeoglobales</taxon>
        <taxon>Archaeoglobaceae</taxon>
        <taxon>Archaeoglobus</taxon>
    </lineage>
</organism>
<accession>O28145</accession>